<name>CYF_ACAM1</name>
<feature type="signal peptide" evidence="1">
    <location>
        <begin position="1"/>
        <end position="36"/>
    </location>
</feature>
<feature type="chain" id="PRO_0000342026" description="Cytochrome f">
    <location>
        <begin position="37"/>
        <end position="315"/>
    </location>
</feature>
<feature type="transmembrane region" description="Helical" evidence="1">
    <location>
        <begin position="281"/>
        <end position="301"/>
    </location>
</feature>
<feature type="binding site" description="axial binding residue" evidence="1">
    <location>
        <position position="37"/>
    </location>
    <ligand>
        <name>heme</name>
        <dbReference type="ChEBI" id="CHEBI:30413"/>
    </ligand>
    <ligandPart>
        <name>Fe</name>
        <dbReference type="ChEBI" id="CHEBI:18248"/>
    </ligandPart>
</feature>
<feature type="binding site" description="covalent" evidence="1">
    <location>
        <position position="57"/>
    </location>
    <ligand>
        <name>heme</name>
        <dbReference type="ChEBI" id="CHEBI:30413"/>
    </ligand>
</feature>
<feature type="binding site" description="covalent" evidence="1">
    <location>
        <position position="60"/>
    </location>
    <ligand>
        <name>heme</name>
        <dbReference type="ChEBI" id="CHEBI:30413"/>
    </ligand>
</feature>
<feature type="binding site" description="axial binding residue" evidence="1">
    <location>
        <position position="61"/>
    </location>
    <ligand>
        <name>heme</name>
        <dbReference type="ChEBI" id="CHEBI:30413"/>
    </ligand>
    <ligandPart>
        <name>Fe</name>
        <dbReference type="ChEBI" id="CHEBI:18248"/>
    </ligandPart>
</feature>
<organism>
    <name type="scientific">Acaryochloris marina (strain MBIC 11017)</name>
    <dbReference type="NCBI Taxonomy" id="329726"/>
    <lineage>
        <taxon>Bacteria</taxon>
        <taxon>Bacillati</taxon>
        <taxon>Cyanobacteriota</taxon>
        <taxon>Cyanophyceae</taxon>
        <taxon>Acaryochloridales</taxon>
        <taxon>Acaryochloridaceae</taxon>
        <taxon>Acaryochloris</taxon>
    </lineage>
</organism>
<sequence length="315" mass="33603">MKQSLLSVLTKKSLRLLAALFLVVTSVFSLPQAAQAFPIYAQQAYDSPREANGRIVCANCHLAAKPTQVEVPQAVLPDTVFEAVIKIPYDTDAQQVLGSGDLGPLNVGAVLMLPDGFQIAPDDRIPEKMKEEINGVFYQKYKPDTDNVIVVGPLSGADHQEIIFPVLSPDPATDPNIHFGKYSVHAGGNRGRGQIYPTGDKTNVNAVTSPAAGLVSSVSENSVTITTNDGQTVTESIPAGLEVVVSEGQAVADGAPLSSDPNVGGFGQKDTEIVLQSGTRIKWLMVFFSAIMISQTLLVLKKKQVEKVQAAEMNF</sequence>
<gene>
    <name evidence="1" type="primary">petA</name>
    <name type="ordered locus">AM1_4449</name>
</gene>
<proteinExistence type="inferred from homology"/>
<reference key="1">
    <citation type="journal article" date="2008" name="Proc. Natl. Acad. Sci. U.S.A.">
        <title>Niche adaptation and genome expansion in the chlorophyll d-producing cyanobacterium Acaryochloris marina.</title>
        <authorList>
            <person name="Swingley W.D."/>
            <person name="Chen M."/>
            <person name="Cheung P.C."/>
            <person name="Conrad A.L."/>
            <person name="Dejesa L.C."/>
            <person name="Hao J."/>
            <person name="Honchak B.M."/>
            <person name="Karbach L.E."/>
            <person name="Kurdoglu A."/>
            <person name="Lahiri S."/>
            <person name="Mastrian S.D."/>
            <person name="Miyashita H."/>
            <person name="Page L."/>
            <person name="Ramakrishna P."/>
            <person name="Satoh S."/>
            <person name="Sattley W.M."/>
            <person name="Shimada Y."/>
            <person name="Taylor H.L."/>
            <person name="Tomo T."/>
            <person name="Tsuchiya T."/>
            <person name="Wang Z.T."/>
            <person name="Raymond J."/>
            <person name="Mimuro M."/>
            <person name="Blankenship R.E."/>
            <person name="Touchman J.W."/>
        </authorList>
    </citation>
    <scope>NUCLEOTIDE SEQUENCE [LARGE SCALE GENOMIC DNA]</scope>
    <source>
        <strain>MBIC 11017</strain>
    </source>
</reference>
<evidence type="ECO:0000255" key="1">
    <source>
        <dbReference type="HAMAP-Rule" id="MF_00610"/>
    </source>
</evidence>
<protein>
    <recommendedName>
        <fullName evidence="1">Cytochrome f</fullName>
    </recommendedName>
</protein>
<accession>B0CFX9</accession>
<keyword id="KW-0249">Electron transport</keyword>
<keyword id="KW-0349">Heme</keyword>
<keyword id="KW-0408">Iron</keyword>
<keyword id="KW-0472">Membrane</keyword>
<keyword id="KW-0479">Metal-binding</keyword>
<keyword id="KW-0602">Photosynthesis</keyword>
<keyword id="KW-1185">Reference proteome</keyword>
<keyword id="KW-0732">Signal</keyword>
<keyword id="KW-0793">Thylakoid</keyword>
<keyword id="KW-0812">Transmembrane</keyword>
<keyword id="KW-1133">Transmembrane helix</keyword>
<keyword id="KW-0813">Transport</keyword>
<dbReference type="EMBL" id="CP000828">
    <property type="protein sequence ID" value="ABW29426.1"/>
    <property type="molecule type" value="Genomic_DNA"/>
</dbReference>
<dbReference type="RefSeq" id="WP_012164744.1">
    <property type="nucleotide sequence ID" value="NC_009925.1"/>
</dbReference>
<dbReference type="SMR" id="B0CFX9"/>
<dbReference type="STRING" id="329726.AM1_4449"/>
<dbReference type="KEGG" id="amr:AM1_4449"/>
<dbReference type="eggNOG" id="COG3258">
    <property type="taxonomic scope" value="Bacteria"/>
</dbReference>
<dbReference type="HOGENOM" id="CLU_033498_0_0_3"/>
<dbReference type="OrthoDB" id="581091at2"/>
<dbReference type="Proteomes" id="UP000000268">
    <property type="component" value="Chromosome"/>
</dbReference>
<dbReference type="GO" id="GO:0031676">
    <property type="term" value="C:plasma membrane-derived thylakoid membrane"/>
    <property type="evidence" value="ECO:0007669"/>
    <property type="project" value="UniProtKB-SubCell"/>
</dbReference>
<dbReference type="GO" id="GO:0009055">
    <property type="term" value="F:electron transfer activity"/>
    <property type="evidence" value="ECO:0007669"/>
    <property type="project" value="UniProtKB-UniRule"/>
</dbReference>
<dbReference type="GO" id="GO:0020037">
    <property type="term" value="F:heme binding"/>
    <property type="evidence" value="ECO:0007669"/>
    <property type="project" value="InterPro"/>
</dbReference>
<dbReference type="GO" id="GO:0005506">
    <property type="term" value="F:iron ion binding"/>
    <property type="evidence" value="ECO:0007669"/>
    <property type="project" value="InterPro"/>
</dbReference>
<dbReference type="GO" id="GO:0015979">
    <property type="term" value="P:photosynthesis"/>
    <property type="evidence" value="ECO:0007669"/>
    <property type="project" value="UniProtKB-UniRule"/>
</dbReference>
<dbReference type="FunFam" id="2.60.40.830:FF:000001">
    <property type="entry name" value="Cytochrome f"/>
    <property type="match status" value="1"/>
</dbReference>
<dbReference type="Gene3D" id="2.40.50.100">
    <property type="match status" value="1"/>
</dbReference>
<dbReference type="Gene3D" id="2.60.40.830">
    <property type="entry name" value="Cytochrome f large domain"/>
    <property type="match status" value="1"/>
</dbReference>
<dbReference type="Gene3D" id="1.20.5.700">
    <property type="entry name" value="Single helix bin"/>
    <property type="match status" value="1"/>
</dbReference>
<dbReference type="HAMAP" id="MF_00610">
    <property type="entry name" value="Cytb6_f_cytF"/>
    <property type="match status" value="1"/>
</dbReference>
<dbReference type="InterPro" id="IPR024058">
    <property type="entry name" value="Cyt-f_TM"/>
</dbReference>
<dbReference type="InterPro" id="IPR002325">
    <property type="entry name" value="Cyt_f"/>
</dbReference>
<dbReference type="InterPro" id="IPR024094">
    <property type="entry name" value="Cyt_f_lg_dom"/>
</dbReference>
<dbReference type="InterPro" id="IPR036826">
    <property type="entry name" value="Cyt_f_lg_dom_sf"/>
</dbReference>
<dbReference type="InterPro" id="IPR011054">
    <property type="entry name" value="Rudment_hybrid_motif"/>
</dbReference>
<dbReference type="NCBIfam" id="NF002736">
    <property type="entry name" value="PRK02693.1"/>
    <property type="match status" value="1"/>
</dbReference>
<dbReference type="PANTHER" id="PTHR33288">
    <property type="match status" value="1"/>
</dbReference>
<dbReference type="PANTHER" id="PTHR33288:SF10">
    <property type="entry name" value="CYTOCHROME F"/>
    <property type="match status" value="1"/>
</dbReference>
<dbReference type="Pfam" id="PF01333">
    <property type="entry name" value="Apocytochr_F_C"/>
    <property type="match status" value="1"/>
</dbReference>
<dbReference type="Pfam" id="PF16639">
    <property type="entry name" value="Apocytochr_F_N"/>
    <property type="match status" value="1"/>
</dbReference>
<dbReference type="PRINTS" id="PR00610">
    <property type="entry name" value="CYTOCHROMEF"/>
</dbReference>
<dbReference type="SUPFAM" id="SSF103431">
    <property type="entry name" value="Cytochrome f subunit of the cytochrome b6f complex, transmembrane anchor"/>
    <property type="match status" value="1"/>
</dbReference>
<dbReference type="SUPFAM" id="SSF49441">
    <property type="entry name" value="Cytochrome f, large domain"/>
    <property type="match status" value="1"/>
</dbReference>
<dbReference type="SUPFAM" id="SSF51246">
    <property type="entry name" value="Rudiment single hybrid motif"/>
    <property type="match status" value="1"/>
</dbReference>
<dbReference type="PROSITE" id="PS51010">
    <property type="entry name" value="CYTF"/>
    <property type="match status" value="1"/>
</dbReference>
<comment type="function">
    <text evidence="1">Component of the cytochrome b6-f complex, which mediates electron transfer between photosystem II (PSII) and photosystem I (PSI), cyclic electron flow around PSI, and state transitions.</text>
</comment>
<comment type="cofactor">
    <cofactor evidence="1">
        <name>heme</name>
        <dbReference type="ChEBI" id="CHEBI:30413"/>
    </cofactor>
    <text evidence="1">Binds 1 heme group covalently.</text>
</comment>
<comment type="subunit">
    <text evidence="1">The 4 large subunits of the cytochrome b6-f complex are cytochrome b6, subunit IV (17 kDa polypeptide, PetD), cytochrome f and the Rieske protein, while the 4 small subunits are PetG, PetL, PetM and PetN. The complex functions as a dimer.</text>
</comment>
<comment type="subcellular location">
    <subcellularLocation>
        <location evidence="1">Cellular thylakoid membrane</location>
        <topology evidence="1">Single-pass membrane protein</topology>
    </subcellularLocation>
</comment>
<comment type="similarity">
    <text evidence="1">Belongs to the cytochrome f family.</text>
</comment>